<gene>
    <name type="ordered locus">Bd2263</name>
</gene>
<evidence type="ECO:0000255" key="1">
    <source>
        <dbReference type="HAMAP-Rule" id="MF_01609"/>
    </source>
</evidence>
<sequence>MTKPQPIPFGKSDLFSLGVEVELQIIHPETRNLFPISPDILEEWSLQSPHLKPEVFQSMLEIDTPICKNVQEVEYELLLTSRELLRICKKHGARLASNGTHPFAKWHHRIFYPSDRYEYLLERNQHIARRLMIYGLHVHLGMKDGDHCIAMMNEFLYYLPHMLAMSASSPFWTGHDTGLASSRITVFEAHPAGGTPCRVENWAQFEDIVQKLTRSNSIGSFKDIWWDIRPSPNYGTLEIRICDGVPGIRKTTRLVAFIHLLAKHLQKRLEQGIRRQTPDDWMVRENKWRASRHGLDCEVLIDNDGMTKNLREDIKDLLAAMKEDAAEMGYTEYLKQLVEEDLTHPSYEIQRALFEKTGSLEHVVDSLCDVFEKDLDVV</sequence>
<keyword id="KW-0067">ATP-binding</keyword>
<keyword id="KW-0436">Ligase</keyword>
<keyword id="KW-0547">Nucleotide-binding</keyword>
<keyword id="KW-1185">Reference proteome</keyword>
<reference key="1">
    <citation type="journal article" date="2004" name="Science">
        <title>A predator unmasked: life cycle of Bdellovibrio bacteriovorus from a genomic perspective.</title>
        <authorList>
            <person name="Rendulic S."/>
            <person name="Jagtap P."/>
            <person name="Rosinus A."/>
            <person name="Eppinger M."/>
            <person name="Baar C."/>
            <person name="Lanz C."/>
            <person name="Keller H."/>
            <person name="Lambert C."/>
            <person name="Evans K.J."/>
            <person name="Goesmann A."/>
            <person name="Meyer F."/>
            <person name="Sockett R.E."/>
            <person name="Schuster S.C."/>
        </authorList>
    </citation>
    <scope>NUCLEOTIDE SEQUENCE [LARGE SCALE GENOMIC DNA]</scope>
    <source>
        <strain>ATCC 15356 / DSM 50701 / NCIMB 9529 / HD100</strain>
    </source>
</reference>
<organism>
    <name type="scientific">Bdellovibrio bacteriovorus (strain ATCC 15356 / DSM 50701 / NCIMB 9529 / HD100)</name>
    <dbReference type="NCBI Taxonomy" id="264462"/>
    <lineage>
        <taxon>Bacteria</taxon>
        <taxon>Pseudomonadati</taxon>
        <taxon>Bdellovibrionota</taxon>
        <taxon>Bdellovibrionia</taxon>
        <taxon>Bdellovibrionales</taxon>
        <taxon>Pseudobdellovibrionaceae</taxon>
        <taxon>Bdellovibrio</taxon>
    </lineage>
</organism>
<comment type="function">
    <text evidence="1">ATP-dependent carboxylate-amine ligase which exhibits weak glutamate--cysteine ligase activity.</text>
</comment>
<comment type="catalytic activity">
    <reaction evidence="1">
        <text>L-cysteine + L-glutamate + ATP = gamma-L-glutamyl-L-cysteine + ADP + phosphate + H(+)</text>
        <dbReference type="Rhea" id="RHEA:13285"/>
        <dbReference type="ChEBI" id="CHEBI:15378"/>
        <dbReference type="ChEBI" id="CHEBI:29985"/>
        <dbReference type="ChEBI" id="CHEBI:30616"/>
        <dbReference type="ChEBI" id="CHEBI:35235"/>
        <dbReference type="ChEBI" id="CHEBI:43474"/>
        <dbReference type="ChEBI" id="CHEBI:58173"/>
        <dbReference type="ChEBI" id="CHEBI:456216"/>
        <dbReference type="EC" id="6.3.2.2"/>
    </reaction>
</comment>
<comment type="similarity">
    <text evidence="1">Belongs to the glutamate--cysteine ligase type 2 family. YbdK subfamily.</text>
</comment>
<dbReference type="EC" id="6.3.2.2" evidence="1"/>
<dbReference type="EMBL" id="BX842652">
    <property type="protein sequence ID" value="CAE80093.1"/>
    <property type="molecule type" value="Genomic_DNA"/>
</dbReference>
<dbReference type="RefSeq" id="WP_011164695.1">
    <property type="nucleotide sequence ID" value="NC_005363.1"/>
</dbReference>
<dbReference type="SMR" id="Q6MKW4"/>
<dbReference type="STRING" id="264462.Bd2263"/>
<dbReference type="GeneID" id="93013194"/>
<dbReference type="KEGG" id="bba:Bd2263"/>
<dbReference type="eggNOG" id="COG2170">
    <property type="taxonomic scope" value="Bacteria"/>
</dbReference>
<dbReference type="HOGENOM" id="CLU_044848_1_0_7"/>
<dbReference type="Proteomes" id="UP000008080">
    <property type="component" value="Chromosome"/>
</dbReference>
<dbReference type="GO" id="GO:0005524">
    <property type="term" value="F:ATP binding"/>
    <property type="evidence" value="ECO:0007669"/>
    <property type="project" value="UniProtKB-KW"/>
</dbReference>
<dbReference type="GO" id="GO:0004357">
    <property type="term" value="F:glutamate-cysteine ligase activity"/>
    <property type="evidence" value="ECO:0007669"/>
    <property type="project" value="UniProtKB-EC"/>
</dbReference>
<dbReference type="GO" id="GO:0042398">
    <property type="term" value="P:modified amino acid biosynthetic process"/>
    <property type="evidence" value="ECO:0007669"/>
    <property type="project" value="InterPro"/>
</dbReference>
<dbReference type="Gene3D" id="3.30.590.20">
    <property type="match status" value="1"/>
</dbReference>
<dbReference type="HAMAP" id="MF_01609">
    <property type="entry name" value="Glu_cys_ligase_2"/>
    <property type="match status" value="1"/>
</dbReference>
<dbReference type="InterPro" id="IPR050141">
    <property type="entry name" value="GCL_type2/YbdK_subfam"/>
</dbReference>
<dbReference type="InterPro" id="IPR006336">
    <property type="entry name" value="GCS2"/>
</dbReference>
<dbReference type="InterPro" id="IPR014746">
    <property type="entry name" value="Gln_synth/guanido_kin_cat_dom"/>
</dbReference>
<dbReference type="InterPro" id="IPR011793">
    <property type="entry name" value="YbdK"/>
</dbReference>
<dbReference type="NCBIfam" id="TIGR02050">
    <property type="entry name" value="gshA_cyan_rel"/>
    <property type="match status" value="1"/>
</dbReference>
<dbReference type="PANTHER" id="PTHR36510">
    <property type="entry name" value="GLUTAMATE--CYSTEINE LIGASE 2-RELATED"/>
    <property type="match status" value="1"/>
</dbReference>
<dbReference type="PANTHER" id="PTHR36510:SF1">
    <property type="entry name" value="GLUTAMATE--CYSTEINE LIGASE 2-RELATED"/>
    <property type="match status" value="1"/>
</dbReference>
<dbReference type="Pfam" id="PF04107">
    <property type="entry name" value="GCS2"/>
    <property type="match status" value="1"/>
</dbReference>
<dbReference type="SUPFAM" id="SSF55931">
    <property type="entry name" value="Glutamine synthetase/guanido kinase"/>
    <property type="match status" value="1"/>
</dbReference>
<protein>
    <recommendedName>
        <fullName evidence="1">Putative glutamate--cysteine ligase 2</fullName>
        <ecNumber evidence="1">6.3.2.2</ecNumber>
    </recommendedName>
    <alternativeName>
        <fullName evidence="1">Gamma-glutamylcysteine synthetase 2</fullName>
        <shortName evidence="1">GCS 2</shortName>
        <shortName evidence="1">Gamma-GCS 2</shortName>
    </alternativeName>
</protein>
<feature type="chain" id="PRO_0000218184" description="Putative glutamate--cysteine ligase 2">
    <location>
        <begin position="1"/>
        <end position="378"/>
    </location>
</feature>
<name>GCS2_BDEBA</name>
<proteinExistence type="inferred from homology"/>
<accession>Q6MKW4</accession>